<reference key="1">
    <citation type="journal article" date="2003" name="Proc. Natl. Acad. Sci. U.S.A.">
        <title>Reductive genome evolution in Buchnera aphidicola.</title>
        <authorList>
            <person name="van Ham R.C.H.J."/>
            <person name="Kamerbeek J."/>
            <person name="Palacios C."/>
            <person name="Rausell C."/>
            <person name="Abascal F."/>
            <person name="Bastolla U."/>
            <person name="Fernandez J.M."/>
            <person name="Jimenez L."/>
            <person name="Postigo M."/>
            <person name="Silva F.J."/>
            <person name="Tamames J."/>
            <person name="Viguera E."/>
            <person name="Latorre A."/>
            <person name="Valencia A."/>
            <person name="Moran F."/>
            <person name="Moya A."/>
        </authorList>
    </citation>
    <scope>NUCLEOTIDE SEQUENCE [LARGE SCALE GENOMIC DNA]</scope>
    <source>
        <strain>Bp</strain>
    </source>
</reference>
<name>GPMA_BUCBP</name>
<sequence>MKVYKLVLMRHGESIWNELNKFTGWHDVDLSNRGVQESLKAAKLLKKHGFYFDYAYSSVLKRSIHTLWNIIKFLDQSWIPVKKSWRLNERHYGALEGLNKDDVIQKYGNDKVQQWRRSFNIAPPKISYLEKKKLAHDSRYNNINFDILPYCESLKLTTQRVLPYWLNEIFPRFQKNTKIIIVAHGNSLRALIKYLNNINDIDILNLNIATGFPIIYEFNSEFKPIQYYYLKQ</sequence>
<keyword id="KW-0312">Gluconeogenesis</keyword>
<keyword id="KW-0324">Glycolysis</keyword>
<keyword id="KW-0413">Isomerase</keyword>
<keyword id="KW-1185">Reference proteome</keyword>
<proteinExistence type="inferred from homology"/>
<feature type="chain" id="PRO_0000179860" description="2,3-bisphosphoglycerate-dependent phosphoglycerate mutase">
    <location>
        <begin position="1"/>
        <end position="232"/>
    </location>
</feature>
<feature type="active site" description="Tele-phosphohistidine intermediate" evidence="1">
    <location>
        <position position="11"/>
    </location>
</feature>
<feature type="active site" description="Proton donor/acceptor" evidence="1">
    <location>
        <position position="89"/>
    </location>
</feature>
<feature type="binding site" evidence="1">
    <location>
        <begin position="10"/>
        <end position="17"/>
    </location>
    <ligand>
        <name>substrate</name>
    </ligand>
</feature>
<feature type="binding site" evidence="1">
    <location>
        <begin position="23"/>
        <end position="24"/>
    </location>
    <ligand>
        <name>substrate</name>
    </ligand>
</feature>
<feature type="binding site" evidence="1">
    <location>
        <position position="62"/>
    </location>
    <ligand>
        <name>substrate</name>
    </ligand>
</feature>
<feature type="binding site" evidence="1">
    <location>
        <begin position="89"/>
        <end position="92"/>
    </location>
    <ligand>
        <name>substrate</name>
    </ligand>
</feature>
<feature type="binding site" evidence="1">
    <location>
        <position position="100"/>
    </location>
    <ligand>
        <name>substrate</name>
    </ligand>
</feature>
<feature type="binding site" evidence="1">
    <location>
        <begin position="116"/>
        <end position="117"/>
    </location>
    <ligand>
        <name>substrate</name>
    </ligand>
</feature>
<feature type="binding site" evidence="1">
    <location>
        <begin position="185"/>
        <end position="186"/>
    </location>
    <ligand>
        <name>substrate</name>
    </ligand>
</feature>
<feature type="site" description="Transition state stabilizer" evidence="1">
    <location>
        <position position="184"/>
    </location>
</feature>
<protein>
    <recommendedName>
        <fullName evidence="1">2,3-bisphosphoglycerate-dependent phosphoglycerate mutase</fullName>
        <shortName evidence="1">BPG-dependent PGAM</shortName>
        <shortName evidence="1">PGAM</shortName>
        <shortName evidence="1">Phosphoglyceromutase</shortName>
        <shortName evidence="1">dPGM</shortName>
        <ecNumber evidence="1">5.4.2.11</ecNumber>
    </recommendedName>
</protein>
<comment type="function">
    <text evidence="1">Catalyzes the interconversion of 2-phosphoglycerate and 3-phosphoglycerate.</text>
</comment>
<comment type="catalytic activity">
    <reaction evidence="1">
        <text>(2R)-2-phosphoglycerate = (2R)-3-phosphoglycerate</text>
        <dbReference type="Rhea" id="RHEA:15901"/>
        <dbReference type="ChEBI" id="CHEBI:58272"/>
        <dbReference type="ChEBI" id="CHEBI:58289"/>
        <dbReference type="EC" id="5.4.2.11"/>
    </reaction>
</comment>
<comment type="pathway">
    <text evidence="1">Carbohydrate degradation; glycolysis; pyruvate from D-glyceraldehyde 3-phosphate: step 3/5.</text>
</comment>
<comment type="subunit">
    <text evidence="1">Homodimer.</text>
</comment>
<comment type="similarity">
    <text evidence="1">Belongs to the phosphoglycerate mutase family. BPG-dependent PGAM subfamily.</text>
</comment>
<evidence type="ECO:0000255" key="1">
    <source>
        <dbReference type="HAMAP-Rule" id="MF_01039"/>
    </source>
</evidence>
<dbReference type="EC" id="5.4.2.11" evidence="1"/>
<dbReference type="EMBL" id="AE016826">
    <property type="protein sequence ID" value="AAO27008.1"/>
    <property type="molecule type" value="Genomic_DNA"/>
</dbReference>
<dbReference type="RefSeq" id="WP_011091409.1">
    <property type="nucleotide sequence ID" value="NC_004545.1"/>
</dbReference>
<dbReference type="SMR" id="Q89AJ4"/>
<dbReference type="STRING" id="224915.bbp_283"/>
<dbReference type="KEGG" id="bab:bbp_283"/>
<dbReference type="eggNOG" id="COG0588">
    <property type="taxonomic scope" value="Bacteria"/>
</dbReference>
<dbReference type="HOGENOM" id="CLU_033323_1_1_6"/>
<dbReference type="OrthoDB" id="9781415at2"/>
<dbReference type="UniPathway" id="UPA00109">
    <property type="reaction ID" value="UER00186"/>
</dbReference>
<dbReference type="Proteomes" id="UP000000601">
    <property type="component" value="Chromosome"/>
</dbReference>
<dbReference type="GO" id="GO:0004619">
    <property type="term" value="F:phosphoglycerate mutase activity"/>
    <property type="evidence" value="ECO:0007669"/>
    <property type="project" value="UniProtKB-EC"/>
</dbReference>
<dbReference type="GO" id="GO:0006094">
    <property type="term" value="P:gluconeogenesis"/>
    <property type="evidence" value="ECO:0007669"/>
    <property type="project" value="UniProtKB-UniRule"/>
</dbReference>
<dbReference type="GO" id="GO:0006096">
    <property type="term" value="P:glycolytic process"/>
    <property type="evidence" value="ECO:0007669"/>
    <property type="project" value="UniProtKB-UniRule"/>
</dbReference>
<dbReference type="CDD" id="cd07067">
    <property type="entry name" value="HP_PGM_like"/>
    <property type="match status" value="1"/>
</dbReference>
<dbReference type="FunFam" id="3.40.50.1240:FF:000003">
    <property type="entry name" value="2,3-bisphosphoglycerate-dependent phosphoglycerate mutase"/>
    <property type="match status" value="1"/>
</dbReference>
<dbReference type="Gene3D" id="3.40.50.1240">
    <property type="entry name" value="Phosphoglycerate mutase-like"/>
    <property type="match status" value="1"/>
</dbReference>
<dbReference type="HAMAP" id="MF_01039">
    <property type="entry name" value="PGAM_GpmA"/>
    <property type="match status" value="1"/>
</dbReference>
<dbReference type="InterPro" id="IPR013078">
    <property type="entry name" value="His_Pase_superF_clade-1"/>
</dbReference>
<dbReference type="InterPro" id="IPR029033">
    <property type="entry name" value="His_PPase_superfam"/>
</dbReference>
<dbReference type="InterPro" id="IPR001345">
    <property type="entry name" value="PG/BPGM_mutase_AS"/>
</dbReference>
<dbReference type="InterPro" id="IPR005952">
    <property type="entry name" value="Phosphogly_mut1"/>
</dbReference>
<dbReference type="NCBIfam" id="TIGR01258">
    <property type="entry name" value="pgm_1"/>
    <property type="match status" value="1"/>
</dbReference>
<dbReference type="NCBIfam" id="NF010713">
    <property type="entry name" value="PRK14115.1"/>
    <property type="match status" value="1"/>
</dbReference>
<dbReference type="PANTHER" id="PTHR11931">
    <property type="entry name" value="PHOSPHOGLYCERATE MUTASE"/>
    <property type="match status" value="1"/>
</dbReference>
<dbReference type="Pfam" id="PF00300">
    <property type="entry name" value="His_Phos_1"/>
    <property type="match status" value="1"/>
</dbReference>
<dbReference type="PIRSF" id="PIRSF000709">
    <property type="entry name" value="6PFK_2-Ptase"/>
    <property type="match status" value="1"/>
</dbReference>
<dbReference type="SMART" id="SM00855">
    <property type="entry name" value="PGAM"/>
    <property type="match status" value="1"/>
</dbReference>
<dbReference type="SUPFAM" id="SSF53254">
    <property type="entry name" value="Phosphoglycerate mutase-like"/>
    <property type="match status" value="1"/>
</dbReference>
<dbReference type="PROSITE" id="PS00175">
    <property type="entry name" value="PG_MUTASE"/>
    <property type="match status" value="1"/>
</dbReference>
<gene>
    <name evidence="1" type="primary">gpmA</name>
    <name type="ordered locus">bbp_283</name>
</gene>
<organism>
    <name type="scientific">Buchnera aphidicola subsp. Baizongia pistaciae (strain Bp)</name>
    <dbReference type="NCBI Taxonomy" id="224915"/>
    <lineage>
        <taxon>Bacteria</taxon>
        <taxon>Pseudomonadati</taxon>
        <taxon>Pseudomonadota</taxon>
        <taxon>Gammaproteobacteria</taxon>
        <taxon>Enterobacterales</taxon>
        <taxon>Erwiniaceae</taxon>
        <taxon>Buchnera</taxon>
    </lineage>
</organism>
<accession>Q89AJ4</accession>